<dbReference type="EC" id="2.5.1.75" evidence="1"/>
<dbReference type="EMBL" id="CP000360">
    <property type="protein sequence ID" value="ABF43559.1"/>
    <property type="molecule type" value="Genomic_DNA"/>
</dbReference>
<dbReference type="RefSeq" id="WP_011525356.1">
    <property type="nucleotide sequence ID" value="NC_008009.1"/>
</dbReference>
<dbReference type="SMR" id="Q1IHU1"/>
<dbReference type="STRING" id="204669.Acid345_4559"/>
<dbReference type="EnsemblBacteria" id="ABF43559">
    <property type="protein sequence ID" value="ABF43559"/>
    <property type="gene ID" value="Acid345_4559"/>
</dbReference>
<dbReference type="KEGG" id="aba:Acid345_4559"/>
<dbReference type="eggNOG" id="COG0324">
    <property type="taxonomic scope" value="Bacteria"/>
</dbReference>
<dbReference type="HOGENOM" id="CLU_032616_0_1_0"/>
<dbReference type="OrthoDB" id="9776390at2"/>
<dbReference type="Proteomes" id="UP000002432">
    <property type="component" value="Chromosome"/>
</dbReference>
<dbReference type="GO" id="GO:0005524">
    <property type="term" value="F:ATP binding"/>
    <property type="evidence" value="ECO:0007669"/>
    <property type="project" value="UniProtKB-UniRule"/>
</dbReference>
<dbReference type="GO" id="GO:0052381">
    <property type="term" value="F:tRNA dimethylallyltransferase activity"/>
    <property type="evidence" value="ECO:0007669"/>
    <property type="project" value="UniProtKB-UniRule"/>
</dbReference>
<dbReference type="GO" id="GO:0006400">
    <property type="term" value="P:tRNA modification"/>
    <property type="evidence" value="ECO:0007669"/>
    <property type="project" value="TreeGrafter"/>
</dbReference>
<dbReference type="Gene3D" id="1.10.20.140">
    <property type="match status" value="1"/>
</dbReference>
<dbReference type="Gene3D" id="3.40.50.300">
    <property type="entry name" value="P-loop containing nucleotide triphosphate hydrolases"/>
    <property type="match status" value="1"/>
</dbReference>
<dbReference type="HAMAP" id="MF_00185">
    <property type="entry name" value="IPP_trans"/>
    <property type="match status" value="1"/>
</dbReference>
<dbReference type="InterPro" id="IPR039657">
    <property type="entry name" value="Dimethylallyltransferase"/>
</dbReference>
<dbReference type="InterPro" id="IPR018022">
    <property type="entry name" value="IPT"/>
</dbReference>
<dbReference type="InterPro" id="IPR027417">
    <property type="entry name" value="P-loop_NTPase"/>
</dbReference>
<dbReference type="NCBIfam" id="TIGR00174">
    <property type="entry name" value="miaA"/>
    <property type="match status" value="1"/>
</dbReference>
<dbReference type="PANTHER" id="PTHR11088">
    <property type="entry name" value="TRNA DIMETHYLALLYLTRANSFERASE"/>
    <property type="match status" value="1"/>
</dbReference>
<dbReference type="PANTHER" id="PTHR11088:SF60">
    <property type="entry name" value="TRNA DIMETHYLALLYLTRANSFERASE"/>
    <property type="match status" value="1"/>
</dbReference>
<dbReference type="Pfam" id="PF01715">
    <property type="entry name" value="IPPT"/>
    <property type="match status" value="1"/>
</dbReference>
<dbReference type="SUPFAM" id="SSF52540">
    <property type="entry name" value="P-loop containing nucleoside triphosphate hydrolases"/>
    <property type="match status" value="2"/>
</dbReference>
<reference key="1">
    <citation type="journal article" date="2009" name="Appl. Environ. Microbiol.">
        <title>Three genomes from the phylum Acidobacteria provide insight into the lifestyles of these microorganisms in soils.</title>
        <authorList>
            <person name="Ward N.L."/>
            <person name="Challacombe J.F."/>
            <person name="Janssen P.H."/>
            <person name="Henrissat B."/>
            <person name="Coutinho P.M."/>
            <person name="Wu M."/>
            <person name="Xie G."/>
            <person name="Haft D.H."/>
            <person name="Sait M."/>
            <person name="Badger J."/>
            <person name="Barabote R.D."/>
            <person name="Bradley B."/>
            <person name="Brettin T.S."/>
            <person name="Brinkac L.M."/>
            <person name="Bruce D."/>
            <person name="Creasy T."/>
            <person name="Daugherty S.C."/>
            <person name="Davidsen T.M."/>
            <person name="DeBoy R.T."/>
            <person name="Detter J.C."/>
            <person name="Dodson R.J."/>
            <person name="Durkin A.S."/>
            <person name="Ganapathy A."/>
            <person name="Gwinn-Giglio M."/>
            <person name="Han C.S."/>
            <person name="Khouri H."/>
            <person name="Kiss H."/>
            <person name="Kothari S.P."/>
            <person name="Madupu R."/>
            <person name="Nelson K.E."/>
            <person name="Nelson W.C."/>
            <person name="Paulsen I."/>
            <person name="Penn K."/>
            <person name="Ren Q."/>
            <person name="Rosovitz M.J."/>
            <person name="Selengut J.D."/>
            <person name="Shrivastava S."/>
            <person name="Sullivan S.A."/>
            <person name="Tapia R."/>
            <person name="Thompson L.S."/>
            <person name="Watkins K.L."/>
            <person name="Yang Q."/>
            <person name="Yu C."/>
            <person name="Zafar N."/>
            <person name="Zhou L."/>
            <person name="Kuske C.R."/>
        </authorList>
    </citation>
    <scope>NUCLEOTIDE SEQUENCE [LARGE SCALE GENOMIC DNA]</scope>
    <source>
        <strain>Ellin345</strain>
    </source>
</reference>
<keyword id="KW-0067">ATP-binding</keyword>
<keyword id="KW-0460">Magnesium</keyword>
<keyword id="KW-0547">Nucleotide-binding</keyword>
<keyword id="KW-1185">Reference proteome</keyword>
<keyword id="KW-0808">Transferase</keyword>
<keyword id="KW-0819">tRNA processing</keyword>
<name>MIAA_KORVE</name>
<protein>
    <recommendedName>
        <fullName evidence="1">tRNA dimethylallyltransferase</fullName>
        <ecNumber evidence="1">2.5.1.75</ecNumber>
    </recommendedName>
    <alternativeName>
        <fullName evidence="1">Dimethylallyl diphosphate:tRNA dimethylallyltransferase</fullName>
        <shortName evidence="1">DMAPP:tRNA dimethylallyltransferase</shortName>
        <shortName evidence="1">DMATase</shortName>
    </alternativeName>
    <alternativeName>
        <fullName evidence="1">Isopentenyl-diphosphate:tRNA isopentenyltransferase</fullName>
        <shortName evidence="1">IPP transferase</shortName>
        <shortName evidence="1">IPPT</shortName>
        <shortName evidence="1">IPTase</shortName>
    </alternativeName>
</protein>
<proteinExistence type="inferred from homology"/>
<evidence type="ECO:0000255" key="1">
    <source>
        <dbReference type="HAMAP-Rule" id="MF_00185"/>
    </source>
</evidence>
<feature type="chain" id="PRO_1000118514" description="tRNA dimethylallyltransferase">
    <location>
        <begin position="1"/>
        <end position="307"/>
    </location>
</feature>
<feature type="region of interest" description="Interaction with substrate tRNA" evidence="1">
    <location>
        <begin position="36"/>
        <end position="39"/>
    </location>
</feature>
<feature type="binding site" evidence="1">
    <location>
        <begin position="11"/>
        <end position="18"/>
    </location>
    <ligand>
        <name>ATP</name>
        <dbReference type="ChEBI" id="CHEBI:30616"/>
    </ligand>
</feature>
<feature type="binding site" evidence="1">
    <location>
        <begin position="13"/>
        <end position="18"/>
    </location>
    <ligand>
        <name>substrate</name>
    </ligand>
</feature>
<feature type="site" description="Interaction with substrate tRNA" evidence="1">
    <location>
        <position position="102"/>
    </location>
</feature>
<feature type="site" description="Interaction with substrate tRNA" evidence="1">
    <location>
        <position position="124"/>
    </location>
</feature>
<gene>
    <name evidence="1" type="primary">miaA</name>
    <name type="ordered locus">Acid345_4559</name>
</gene>
<sequence>MSDPLLFVLLGPTGSGKTSLSIALAERFGGEIVNCDSVAVYRELDIGTAKPTHEERESVPHHLFDVLPPTEPMTAGEYARRAREVLKDIASRGKLPIVVGGTGLYLRALLDGLFAGPERSEELREHLRRREQERGPTYLHRILSRMDRVAAAKIHPNDAAKLIRAIEVCLAARKPMTELWQQGRDPLTGFRILRIGLDPDRPALYDRINRRAAEMFEQGLVEETQALLAKYGRIGGPLDSLGYRQAFELLDGKLTREQAVAAAQQGHRNYAKRQMTWFRREPEVRWLKGFGDDAAIVGEAMQIIKTS</sequence>
<comment type="function">
    <text evidence="1">Catalyzes the transfer of a dimethylallyl group onto the adenine at position 37 in tRNAs that read codons beginning with uridine, leading to the formation of N6-(dimethylallyl)adenosine (i(6)A).</text>
</comment>
<comment type="catalytic activity">
    <reaction evidence="1">
        <text>adenosine(37) in tRNA + dimethylallyl diphosphate = N(6)-dimethylallyladenosine(37) in tRNA + diphosphate</text>
        <dbReference type="Rhea" id="RHEA:26482"/>
        <dbReference type="Rhea" id="RHEA-COMP:10162"/>
        <dbReference type="Rhea" id="RHEA-COMP:10375"/>
        <dbReference type="ChEBI" id="CHEBI:33019"/>
        <dbReference type="ChEBI" id="CHEBI:57623"/>
        <dbReference type="ChEBI" id="CHEBI:74411"/>
        <dbReference type="ChEBI" id="CHEBI:74415"/>
        <dbReference type="EC" id="2.5.1.75"/>
    </reaction>
</comment>
<comment type="cofactor">
    <cofactor evidence="1">
        <name>Mg(2+)</name>
        <dbReference type="ChEBI" id="CHEBI:18420"/>
    </cofactor>
</comment>
<comment type="subunit">
    <text evidence="1">Monomer.</text>
</comment>
<comment type="similarity">
    <text evidence="1">Belongs to the IPP transferase family.</text>
</comment>
<accession>Q1IHU1</accession>
<organism>
    <name type="scientific">Koribacter versatilis (strain Ellin345)</name>
    <dbReference type="NCBI Taxonomy" id="204669"/>
    <lineage>
        <taxon>Bacteria</taxon>
        <taxon>Pseudomonadati</taxon>
        <taxon>Acidobacteriota</taxon>
        <taxon>Terriglobia</taxon>
        <taxon>Terriglobales</taxon>
        <taxon>Candidatus Korobacteraceae</taxon>
        <taxon>Candidatus Korobacter</taxon>
    </lineage>
</organism>